<dbReference type="EMBL" id="U37532">
    <property type="protein sequence ID" value="AAC05308.1"/>
    <property type="molecule type" value="mRNA"/>
</dbReference>
<dbReference type="EMBL" id="BX284601">
    <property type="protein sequence ID" value="CCD73394.2"/>
    <property type="molecule type" value="Genomic_DNA"/>
</dbReference>
<dbReference type="PIR" id="A57667">
    <property type="entry name" value="A57667"/>
</dbReference>
<dbReference type="PIR" id="C87732">
    <property type="entry name" value="C87732"/>
</dbReference>
<dbReference type="PIR" id="T32931">
    <property type="entry name" value="T32931"/>
</dbReference>
<dbReference type="RefSeq" id="NP_491053.4">
    <property type="nucleotide sequence ID" value="NM_058652.3"/>
</dbReference>
<dbReference type="PDB" id="3C2G">
    <property type="method" value="X-ray"/>
    <property type="resolution" value="2.50 A"/>
    <property type="chains" value="C/D=8-15"/>
</dbReference>
<dbReference type="PDBsum" id="3C2G"/>
<dbReference type="SMR" id="Q10666"/>
<dbReference type="BioGRID" id="37329">
    <property type="interactions" value="66"/>
</dbReference>
<dbReference type="DIP" id="DIP-25683N"/>
<dbReference type="FunCoup" id="Q10666">
    <property type="interactions" value="573"/>
</dbReference>
<dbReference type="IntAct" id="Q10666">
    <property type="interactions" value="50"/>
</dbReference>
<dbReference type="STRING" id="6239.W10C8.2.1"/>
<dbReference type="iPTMnet" id="Q10666"/>
<dbReference type="PaxDb" id="6239-W10C8.2"/>
<dbReference type="PeptideAtlas" id="Q10666"/>
<dbReference type="EnsemblMetazoa" id="W10C8.2.1">
    <property type="protein sequence ID" value="W10C8.2.1"/>
    <property type="gene ID" value="WBGene00004077"/>
</dbReference>
<dbReference type="GeneID" id="171849"/>
<dbReference type="KEGG" id="cel:CELE_W10C8.2"/>
<dbReference type="UCSC" id="W10C8.2">
    <property type="organism name" value="c. elegans"/>
</dbReference>
<dbReference type="AGR" id="WB:WBGene00004077"/>
<dbReference type="CTD" id="171849"/>
<dbReference type="WormBase" id="W10C8.2">
    <property type="protein sequence ID" value="CE46967"/>
    <property type="gene ID" value="WBGene00004077"/>
    <property type="gene designation" value="pop-1"/>
</dbReference>
<dbReference type="eggNOG" id="KOG3248">
    <property type="taxonomic scope" value="Eukaryota"/>
</dbReference>
<dbReference type="GeneTree" id="ENSGT00940000168653"/>
<dbReference type="HOGENOM" id="CLU_625901_0_0_1"/>
<dbReference type="InParanoid" id="Q10666"/>
<dbReference type="OMA" id="RCLWYRE"/>
<dbReference type="OrthoDB" id="2307332at2759"/>
<dbReference type="Reactome" id="R-CEL-201722">
    <property type="pathway name" value="Formation of the beta-catenin:TCF transactivating complex"/>
</dbReference>
<dbReference type="Reactome" id="R-CEL-3769402">
    <property type="pathway name" value="Deactivation of the beta-catenin transactivating complex"/>
</dbReference>
<dbReference type="Reactome" id="R-CEL-4086398">
    <property type="pathway name" value="Ca2+ pathway"/>
</dbReference>
<dbReference type="Reactome" id="R-CEL-4641265">
    <property type="pathway name" value="Repression of WNT target genes"/>
</dbReference>
<dbReference type="Reactome" id="R-CEL-8853884">
    <property type="pathway name" value="Transcriptional Regulation by VENTX"/>
</dbReference>
<dbReference type="Reactome" id="R-CEL-8951430">
    <property type="pathway name" value="RUNX3 regulates WNT signaling"/>
</dbReference>
<dbReference type="Reactome" id="R-CEL-9825892">
    <property type="pathway name" value="Regulation of MITF-M-dependent genes involved in cell cycle and proliferation"/>
</dbReference>
<dbReference type="SignaLink" id="Q10666"/>
<dbReference type="EvolutionaryTrace" id="Q10666"/>
<dbReference type="PRO" id="PR:Q10666"/>
<dbReference type="Proteomes" id="UP000001940">
    <property type="component" value="Chromosome I"/>
</dbReference>
<dbReference type="Bgee" id="WBGene00004077">
    <property type="expression patterns" value="Expressed in pharyngeal muscle cell (C elegans) and 3 other cell types or tissues"/>
</dbReference>
<dbReference type="GO" id="GO:1990907">
    <property type="term" value="C:beta-catenin-TCF complex"/>
    <property type="evidence" value="ECO:0000318"/>
    <property type="project" value="GO_Central"/>
</dbReference>
<dbReference type="GO" id="GO:0000785">
    <property type="term" value="C:chromatin"/>
    <property type="evidence" value="ECO:0000318"/>
    <property type="project" value="GO_Central"/>
</dbReference>
<dbReference type="GO" id="GO:0005737">
    <property type="term" value="C:cytoplasm"/>
    <property type="evidence" value="ECO:0000314"/>
    <property type="project" value="UniProtKB"/>
</dbReference>
<dbReference type="GO" id="GO:0005634">
    <property type="term" value="C:nucleus"/>
    <property type="evidence" value="ECO:0000314"/>
    <property type="project" value="UniProtKB"/>
</dbReference>
<dbReference type="GO" id="GO:0008013">
    <property type="term" value="F:beta-catenin binding"/>
    <property type="evidence" value="ECO:0000353"/>
    <property type="project" value="UniProtKB"/>
</dbReference>
<dbReference type="GO" id="GO:0001228">
    <property type="term" value="F:DNA-binding transcription activator activity, RNA polymerase II-specific"/>
    <property type="evidence" value="ECO:0000314"/>
    <property type="project" value="UniProtKB"/>
</dbReference>
<dbReference type="GO" id="GO:0003700">
    <property type="term" value="F:DNA-binding transcription factor activity"/>
    <property type="evidence" value="ECO:0000314"/>
    <property type="project" value="WormBase"/>
</dbReference>
<dbReference type="GO" id="GO:0000981">
    <property type="term" value="F:DNA-binding transcription factor activity, RNA polymerase II-specific"/>
    <property type="evidence" value="ECO:0000314"/>
    <property type="project" value="WormBase"/>
</dbReference>
<dbReference type="GO" id="GO:0035035">
    <property type="term" value="F:histone acetyltransferase binding"/>
    <property type="evidence" value="ECO:0000353"/>
    <property type="project" value="WormBase"/>
</dbReference>
<dbReference type="GO" id="GO:0042826">
    <property type="term" value="F:histone deacetylase binding"/>
    <property type="evidence" value="ECO:0000353"/>
    <property type="project" value="UniProtKB"/>
</dbReference>
<dbReference type="GO" id="GO:0019901">
    <property type="term" value="F:protein kinase binding"/>
    <property type="evidence" value="ECO:0000353"/>
    <property type="project" value="UniProtKB"/>
</dbReference>
<dbReference type="GO" id="GO:0000978">
    <property type="term" value="F:RNA polymerase II cis-regulatory region sequence-specific DNA binding"/>
    <property type="evidence" value="ECO:0000314"/>
    <property type="project" value="UniProtKB"/>
</dbReference>
<dbReference type="GO" id="GO:0000977">
    <property type="term" value="F:RNA polymerase II transcription regulatory region sequence-specific DNA binding"/>
    <property type="evidence" value="ECO:0000314"/>
    <property type="project" value="WormBase"/>
</dbReference>
<dbReference type="GO" id="GO:0061629">
    <property type="term" value="F:RNA polymerase II-specific DNA-binding transcription factor binding"/>
    <property type="evidence" value="ECO:0000353"/>
    <property type="project" value="WormBase"/>
</dbReference>
<dbReference type="GO" id="GO:0043565">
    <property type="term" value="F:sequence-specific DNA binding"/>
    <property type="evidence" value="ECO:0000314"/>
    <property type="project" value="WormBase"/>
</dbReference>
<dbReference type="GO" id="GO:0003714">
    <property type="term" value="F:transcription corepressor activity"/>
    <property type="evidence" value="ECO:0000314"/>
    <property type="project" value="UniProtKB"/>
</dbReference>
<dbReference type="GO" id="GO:0001222">
    <property type="term" value="F:transcription corepressor binding"/>
    <property type="evidence" value="ECO:0000353"/>
    <property type="project" value="UniProtKB"/>
</dbReference>
<dbReference type="GO" id="GO:0008356">
    <property type="term" value="P:asymmetric cell division"/>
    <property type="evidence" value="ECO:0000315"/>
    <property type="project" value="UniProtKB"/>
</dbReference>
<dbReference type="GO" id="GO:0060070">
    <property type="term" value="P:canonical Wnt signaling pathway"/>
    <property type="evidence" value="ECO:0000314"/>
    <property type="project" value="WormBase"/>
</dbReference>
<dbReference type="GO" id="GO:0001709">
    <property type="term" value="P:cell fate determination"/>
    <property type="evidence" value="ECO:0000315"/>
    <property type="project" value="UniProtKB"/>
</dbReference>
<dbReference type="GO" id="GO:0001708">
    <property type="term" value="P:cell fate specification"/>
    <property type="evidence" value="ECO:0000315"/>
    <property type="project" value="UniProtKB"/>
</dbReference>
<dbReference type="GO" id="GO:0009880">
    <property type="term" value="P:embryonic pattern specification"/>
    <property type="evidence" value="ECO:0000315"/>
    <property type="project" value="UniProtKB"/>
</dbReference>
<dbReference type="GO" id="GO:0035262">
    <property type="term" value="P:gonad morphogenesis"/>
    <property type="evidence" value="ECO:0000315"/>
    <property type="project" value="UniProtKB"/>
</dbReference>
<dbReference type="GO" id="GO:0007500">
    <property type="term" value="P:mesodermal cell fate determination"/>
    <property type="evidence" value="ECO:0000315"/>
    <property type="project" value="WormBase"/>
</dbReference>
<dbReference type="GO" id="GO:0007501">
    <property type="term" value="P:mesodermal cell fate specification"/>
    <property type="evidence" value="ECO:0000315"/>
    <property type="project" value="UniProtKB"/>
</dbReference>
<dbReference type="GO" id="GO:0034514">
    <property type="term" value="P:mitochondrial unfolded protein response"/>
    <property type="evidence" value="ECO:0000314"/>
    <property type="project" value="WormBase"/>
</dbReference>
<dbReference type="GO" id="GO:0051782">
    <property type="term" value="P:negative regulation of cell division"/>
    <property type="evidence" value="ECO:0000315"/>
    <property type="project" value="UniProtKB"/>
</dbReference>
<dbReference type="GO" id="GO:0045892">
    <property type="term" value="P:negative regulation of DNA-templated transcription"/>
    <property type="evidence" value="ECO:0000314"/>
    <property type="project" value="UniProtKB"/>
</dbReference>
<dbReference type="GO" id="GO:0010629">
    <property type="term" value="P:negative regulation of gene expression"/>
    <property type="evidence" value="ECO:0000315"/>
    <property type="project" value="UniProtKB"/>
</dbReference>
<dbReference type="GO" id="GO:2000647">
    <property type="term" value="P:negative regulation of stem cell proliferation"/>
    <property type="evidence" value="ECO:0000315"/>
    <property type="project" value="UniProtKB"/>
</dbReference>
<dbReference type="GO" id="GO:0160096">
    <property type="term" value="P:nematode pharyngeal muscle development"/>
    <property type="evidence" value="ECO:0000315"/>
    <property type="project" value="WormBase"/>
</dbReference>
<dbReference type="GO" id="GO:0010085">
    <property type="term" value="P:polarity specification of proximal/distal axis"/>
    <property type="evidence" value="ECO:0000316"/>
    <property type="project" value="WormBase"/>
</dbReference>
<dbReference type="GO" id="GO:0045893">
    <property type="term" value="P:positive regulation of DNA-templated transcription"/>
    <property type="evidence" value="ECO:0000315"/>
    <property type="project" value="UniProtKB"/>
</dbReference>
<dbReference type="GO" id="GO:0010628">
    <property type="term" value="P:positive regulation of gene expression"/>
    <property type="evidence" value="ECO:0000315"/>
    <property type="project" value="UniProtKB"/>
</dbReference>
<dbReference type="GO" id="GO:0045944">
    <property type="term" value="P:positive regulation of transcription by RNA polymerase II"/>
    <property type="evidence" value="ECO:0000314"/>
    <property type="project" value="UniProtKB"/>
</dbReference>
<dbReference type="GO" id="GO:0040026">
    <property type="term" value="P:positive regulation of vulval development"/>
    <property type="evidence" value="ECO:0000315"/>
    <property type="project" value="WormBase"/>
</dbReference>
<dbReference type="GO" id="GO:0009786">
    <property type="term" value="P:regulation of asymmetric cell division"/>
    <property type="evidence" value="ECO:0000316"/>
    <property type="project" value="WormBase"/>
</dbReference>
<dbReference type="GO" id="GO:0042659">
    <property type="term" value="P:regulation of cell fate specification"/>
    <property type="evidence" value="ECO:0000316"/>
    <property type="project" value="WormBase"/>
</dbReference>
<dbReference type="GO" id="GO:2000746">
    <property type="term" value="P:regulation of defecation rhythm"/>
    <property type="evidence" value="ECO:0000315"/>
    <property type="project" value="WormBase"/>
</dbReference>
<dbReference type="GO" id="GO:0061853">
    <property type="term" value="P:regulation of neuroblast migration"/>
    <property type="evidence" value="ECO:0000315"/>
    <property type="project" value="WormBase"/>
</dbReference>
<dbReference type="GO" id="GO:0006357">
    <property type="term" value="P:regulation of transcription by RNA polymerase II"/>
    <property type="evidence" value="ECO:0000250"/>
    <property type="project" value="WormBase"/>
</dbReference>
<dbReference type="GO" id="GO:0016055">
    <property type="term" value="P:Wnt signaling pathway"/>
    <property type="evidence" value="ECO:0000304"/>
    <property type="project" value="UniProtKB"/>
</dbReference>
<dbReference type="FunFam" id="1.10.30.10:FF:000059">
    <property type="entry name" value="Protein pop-1"/>
    <property type="match status" value="1"/>
</dbReference>
<dbReference type="Gene3D" id="1.10.30.10">
    <property type="entry name" value="High mobility group box domain"/>
    <property type="match status" value="1"/>
</dbReference>
<dbReference type="InterPro" id="IPR009071">
    <property type="entry name" value="HMG_box_dom"/>
</dbReference>
<dbReference type="InterPro" id="IPR036910">
    <property type="entry name" value="HMG_box_dom_sf"/>
</dbReference>
<dbReference type="InterPro" id="IPR024940">
    <property type="entry name" value="TCF/LEF"/>
</dbReference>
<dbReference type="PANTHER" id="PTHR10373:SF38">
    <property type="entry name" value="PROTEIN PANGOLIN, ISOFORM J"/>
    <property type="match status" value="1"/>
</dbReference>
<dbReference type="PANTHER" id="PTHR10373">
    <property type="entry name" value="TRANSCRIPTION FACTOR 7 FAMILY MEMBER"/>
    <property type="match status" value="1"/>
</dbReference>
<dbReference type="Pfam" id="PF00505">
    <property type="entry name" value="HMG_box"/>
    <property type="match status" value="1"/>
</dbReference>
<dbReference type="SMART" id="SM01366">
    <property type="entry name" value="c-clamp"/>
    <property type="match status" value="1"/>
</dbReference>
<dbReference type="SMART" id="SM00398">
    <property type="entry name" value="HMG"/>
    <property type="match status" value="1"/>
</dbReference>
<dbReference type="SUPFAM" id="SSF47095">
    <property type="entry name" value="HMG-box"/>
    <property type="match status" value="1"/>
</dbReference>
<dbReference type="PROSITE" id="PS50118">
    <property type="entry name" value="HMG_BOX_2"/>
    <property type="match status" value="1"/>
</dbReference>
<accession>Q10666</accession>
<accession>O45007</accession>
<sequence length="438" mass="48627">MMADEELGDEVKVFRRDEDADDDPMISGETSEQQLADDKKEAVMEAELDGAGRNPSIDVLKSAFPKVEPMSPSFPGLMSHFSPGYSAAALPMFMPLFMNPYAAALRSPSLMFPMGAMSPTFPMFPPSPVYGAAIAAAAAKQHFENMAPLNMRAGHPMNQMGMPPYMHPSSMAPQNVDRRAQGGGKAKKDDHVKKPLNAFMWFMKENRKALLEEIGNNEKQSAELNKELGKRWHDLSKEEQAKYFEMAKKDKETHKERYPEWSARENYAVNKKKTKKRRDKSIPSENNDQKKCRARFGVNNTEMWCKFCKRKKKCEYATDRSGGSDITDSQDGRGTSGAYSSSSESPSPKANAGIALTTQQQQAAMMHTMLMQMRLGSTTGASTHVPSPLASSSAGRSPLDANASDSESDVEEEEDEQIDPTVMQQTHDMLMQESMCTI</sequence>
<evidence type="ECO:0000255" key="1">
    <source>
        <dbReference type="PROSITE-ProRule" id="PRU00267"/>
    </source>
</evidence>
<evidence type="ECO:0000256" key="2">
    <source>
        <dbReference type="SAM" id="MobiDB-lite"/>
    </source>
</evidence>
<evidence type="ECO:0000269" key="3">
    <source>
    </source>
</evidence>
<evidence type="ECO:0000269" key="4">
    <source>
    </source>
</evidence>
<evidence type="ECO:0000269" key="5">
    <source>
    </source>
</evidence>
<evidence type="ECO:0000269" key="6">
    <source>
    </source>
</evidence>
<evidence type="ECO:0000269" key="7">
    <source>
    </source>
</evidence>
<evidence type="ECO:0000269" key="8">
    <source>
    </source>
</evidence>
<evidence type="ECO:0000269" key="9">
    <source>
    </source>
</evidence>
<evidence type="ECO:0000269" key="10">
    <source>
    </source>
</evidence>
<evidence type="ECO:0000269" key="11">
    <source>
    </source>
</evidence>
<evidence type="ECO:0000269" key="12">
    <source>
    </source>
</evidence>
<evidence type="ECO:0000269" key="13">
    <source>
    </source>
</evidence>
<evidence type="ECO:0000269" key="14">
    <source>
    </source>
</evidence>
<evidence type="ECO:0000269" key="15">
    <source>
    </source>
</evidence>
<evidence type="ECO:0000269" key="16">
    <source>
    </source>
</evidence>
<evidence type="ECO:0000269" key="17">
    <source>
    </source>
</evidence>
<evidence type="ECO:0000303" key="18">
    <source>
    </source>
</evidence>
<evidence type="ECO:0000305" key="19"/>
<evidence type="ECO:0000312" key="20">
    <source>
        <dbReference type="WormBase" id="W10C8.2"/>
    </source>
</evidence>
<evidence type="ECO:0007744" key="21">
    <source>
        <dbReference type="PDB" id="3C2G"/>
    </source>
</evidence>
<comment type="function">
    <text evidence="5 6 13 17">Transcription factor (PubMed:23633508, PubMed:26073017). Part of the Wnt signaling asymmetry pathway (PubMed:11742996, PubMed:11807036, PubMed:17296929, PubMed:17567664, PubMed:19386265, PubMed:19427847). Binds to the consensus sequence, 5'-(C/T)TTTG(A/T)(A/T)(G/C)-3' (PubMed:23633508). Activates or represses target gene expression, depending on upstream Wnt signals and interactions with transcription co-regulators, such as beta-catenin/sys-1 or zinc finger transcription factor ref-2 (PubMed:26073017). Essential for the specification of the mesodermal and endodermal cell fates in early embryos (PubMed:11742996, PubMed:11807036, PubMed:17567664, PubMed:19427847). Required in many asymmetrical cell divisions in the early embryo and during larval development (PubMed:11742996, PubMed:11807036, PubMed:19386265, PubMed:19427847, PubMed:26073017, PubMed:31740621, PubMed:35660370). Reciprocal distribution patterns of sys-1 and pop-1 in the daughters of anterior-posterior cell divisions functions in specifying cell fate; a higher sys-1 to pop-1 ratio promotes the posterior cell fate, whereas a low sys-1 to pop-1 ratio promotes the anterior fate (PubMed:17296929, PubMed:17567664). Involved in modulating nuclear localization or nuclear retention of sys-1 (PubMed:17567664). Involved in the terminal asymmetrical division of many embryonic neuroblasts; for example in the SMDD/AIY neuron lineage (PubMed:19386265, PubMed:26073017). In complex with ref-2, positively modulates expression of LIM/homeobox protein ttx-3 in anterior daughter cells of the SMDD/AIY lineage (PubMed:26073017). Required for asymmetrical division of somatic gonadal precursor descendants which initiate axis formation required to control organ shape (PubMed:11807036). Similarly, involved in asymmetrical division of seam cells, a stem cell-like lineage (PubMed:31740621). Represses expression of target genes via its interaction with hda-1 histone deacetylase (PubMed:11742996). Required for specification of the M lineage-derived coelomocyte and sex myoblast fate (PubMed:19427847). Regulates coelomocyte fate by positively regulating proliferation and ceh-34 and possibly eya-1 expression in M.dlpa and M.drpa precursors (PubMed:19427847).</text>
</comment>
<comment type="subunit">
    <text evidence="3 4 5 8 14">Interacts (via N-terminal region) with beta-catenin homolog sys-1 (PubMed:18477457). Interacts with hda-1 (PubMed:11742996). Interacts with bar-1 (PubMed:10952315). Interacts with par-5; the interaction is direct and is enhanced by lit-1-mediated pop-1 phosphorylation (PubMed:15066285). The interaction also leads to the subsequent nuclear export of pop-1 (PubMed:15066285). Interacts (when phosphorylated on Ser-118 and Ser-127) with lit-1; the interaction is dependent on the beta-catenin-lit-1 complex (PubMed:10380924, PubMed:15066285). Interacts with wrm-1 (PubMed:10380924). Interacts with homeobox protein egl-5 (PubMed:20553900). Interacts with zinc finger transcription factor ref-2; the interaction is direct and facilitates transcriptional activation; transcription may be repressed by beta-catenin/sys-1 (PubMed:26073017).</text>
</comment>
<comment type="interaction">
    <interactant intactId="EBI-317870">
        <id>Q10666</id>
    </interactant>
    <interactant intactId="EBI-2528850">
        <id>Q18825</id>
        <label>bar-1</label>
    </interactant>
    <organismsDiffer>false</organismsDiffer>
    <experiments>6</experiments>
</comment>
<comment type="interaction">
    <interactant intactId="EBI-317870">
        <id>Q10666</id>
    </interactant>
    <interactant intactId="EBI-311862">
        <id>O17670</id>
        <label>eya-1</label>
    </interactant>
    <organismsDiffer>false</organismsDiffer>
    <experiments>4</experiments>
</comment>
<comment type="interaction">
    <interactant intactId="EBI-317870">
        <id>Q10666</id>
    </interactant>
    <interactant intactId="EBI-318045">
        <id>O17695</id>
        <label>hda-1</label>
    </interactant>
    <organismsDiffer>false</organismsDiffer>
    <experiments>3</experiments>
</comment>
<comment type="interaction">
    <interactant intactId="EBI-317870">
        <id>Q10666</id>
    </interactant>
    <interactant intactId="EBI-2420993">
        <id>O18214</id>
        <label>mab-3</label>
    </interactant>
    <organismsDiffer>false</organismsDiffer>
    <experiments>3</experiments>
</comment>
<comment type="interaction">
    <interactant intactId="EBI-317870">
        <id>Q10666</id>
    </interactant>
    <interactant intactId="EBI-318108">
        <id>P41932</id>
        <label>par-5</label>
    </interactant>
    <organismsDiffer>false</organismsDiffer>
    <experiments>2</experiments>
</comment>
<comment type="interaction">
    <interactant intactId="EBI-317870">
        <id>Q10666</id>
    </interactant>
    <interactant intactId="EBI-3871339">
        <id>Q9XVI2</id>
        <label>sys-1</label>
    </interactant>
    <organismsDiffer>false</organismsDiffer>
    <experiments>6</experiments>
</comment>
<comment type="interaction">
    <interactant intactId="EBI-317870">
        <id>Q10666</id>
    </interactant>
    <interactant intactId="EBI-2413404">
        <id>Q9XVD5</id>
        <label>tbx-38</label>
    </interactant>
    <organismsDiffer>false</organismsDiffer>
    <experiments>3</experiments>
</comment>
<comment type="interaction">
    <interactant intactId="EBI-317870">
        <id>Q10666</id>
    </interactant>
    <interactant intactId="EBI-2414897">
        <id>Q18694</id>
        <label>unc-130</label>
    </interactant>
    <organismsDiffer>false</organismsDiffer>
    <experiments>3</experiments>
</comment>
<comment type="interaction">
    <interactant intactId="EBI-317870">
        <id>Q10666</id>
    </interactant>
    <interactant intactId="EBI-314716">
        <id>O02482</id>
        <label>unc-37</label>
    </interactant>
    <organismsDiffer>false</organismsDiffer>
    <experiments>3</experiments>
</comment>
<comment type="interaction">
    <interactant intactId="EBI-317870">
        <id>Q10666</id>
    </interactant>
    <interactant intactId="EBI-332523">
        <id>Q9NAE4</id>
        <label>zip-7</label>
    </interactant>
    <organismsDiffer>false</organismsDiffer>
    <experiments>3</experiments>
</comment>
<comment type="subcellular location">
    <subcellularLocation>
        <location evidence="1 3 9 10 12 13 15 16 17">Nucleus</location>
    </subcellularLocation>
    <subcellularLocation>
        <location evidence="3">Cytoplasm</location>
    </subcellularLocation>
    <text evidence="3 8 17">Predominantly nuclear, but is exported out of the nucleus and into the cytoplasm upon lit-1-mediated phosphorylation (PubMed:10380924, PubMed:15066285). Soon after the nuclei reform in telophase, pop-1 levels decrease in the posterior nucleus, in contrast to the anterior nucleus (PubMed:31740621). There is a ~2-fold nuclear enrichment of pop-1 in the anterior compared with posterior daughter cells at the time of cytokinesis (PubMed:19386265, PubMed:26073017, PubMed:31740621).</text>
</comment>
<comment type="developmental stage">
    <text evidence="3 7 9 13 15 17">Expressed maternally and zygotically (PubMed:10380924). Expressed in the first 32 daughter cells of the MS blastomere cell, and in the 8-cell stage ABar blastomere and subsequently, asymmetrically in its descendants (PubMed:12810601). Expression is higher in the anterior daughters of dividing cells, but lower in the posterior daughters (PubMed:10380924, PubMed:12810601, PubMed:17296929, PubMed:17567664, PubMed:19386265). Expressed asymmetrically in vulva precursor cells P5.p, P6.p and P7.p at L2 larval stage and in their descendants (PubMed:15649465). Expressed asymmetrically in somatic gonadal precursor cells Z1.p, Z4.a, Z1.a and Z4.p (PubMed:25569233). During M-lineage cell fate specification, expressed evenly from 1-M to 4-M stages followed by asymmetric expression in anterior cells at the 8-M, 16-M and 18-M stages (PubMed:19427847). Expressed asymmetrically in seam cells at larval stages L2 and L3 (PubMed:31740621). Transiently expressed asymmetrically in the embryo in the SMDD/AIY neuron lineage; asymmetry of expression is lost at the 1.5-fold stage (PubMed:19386265, PubMed:26073017).</text>
</comment>
<comment type="PTM">
    <text evidence="3 8">Phosphorylated on Ser-118 and Ser-127 by lit-1 in the beta-catenin-lit-1 complex (PubMed:10380924, PubMed:15066285). Phosphorylation promotes the interaction of pop-1 and par-5 and the subsequent translocation of pop-1 from the nucleus to the cytoplasm (PubMed:10380924, PubMed:15066285).</text>
</comment>
<comment type="disruption phenotype">
    <text evidence="13 17">Knockout specifically targeted at seam cells causes an increase in seam cell number, but this is caused by a combination of anterior daughter cells adopting the seam fate, and abnormal differentiation of posterior seam cells (PubMed:31740621). RNAi-mediated knockdown also increases the number of seam cells as a result of anterior daughter cells failing to differentiate and adopting the seam fate (PubMed:23633508, PubMed:31740621). RNAi-mediated knockdown in L1 larvae causes a severe loss of M lineage-derived coelomocytes and sex myoblasts (PubMed:19427847). The loss of sex myoblasts is due to a fate transformation of M.v(l/r)pa cell to the fate of its posterior sister M.v(l/r)pp cell (PubMed:19427847). The loss of coelomocytes is due to a combination of reduced proliferation of the dorsal M lineage and fate transformation of M.d(l/r)pa cell to the fate of its posterior sister M.d(l/r)pp cell (PubMed:19427847). Guts are missing in about 4% of embryos, but this increases to 99% in a transcription factor skn-1 mutant background (PubMed:17296929). Loss of ceh-34 expression in the M lineage (PubMed:19427847). RNAi-mediated knockdown reduces expression of various genes, e.g. tbx-35, ceh-51 and irx-1, in anterior cell lineages, and increases expression of those genes in posterior lineages (PubMed:35660370). Decreases nuclear localization and increases cytoplasmic localization of beta-catenin/sys-1 (PubMed:17567664). An increase in seam cell number, caused by RNAi-mediated knockdown at the L1 larval stage, is suppressed in an egl-18 mutant background (PubMed:23633508). RNAi-mediated knockdown in L1 larvae causes a large increase in the number of lateral midline cells strongly expressing egl-18 (PubMed:23633508).</text>
</comment>
<comment type="similarity">
    <text evidence="19">Belongs to the TCF/LEF family.</text>
</comment>
<reference key="1">
    <citation type="journal article" date="1995" name="Cell">
        <title>pop-1 encodes an HMG box protein required for the specification of a mesoderm precursor in early C. elegans embryos.</title>
        <authorList>
            <person name="Lin R."/>
            <person name="Thompson S."/>
            <person name="Priess J.R."/>
        </authorList>
    </citation>
    <scope>NUCLEOTIDE SEQUENCE [MRNA]</scope>
    <source>
        <strain>Bristol N2</strain>
    </source>
</reference>
<reference key="2">
    <citation type="submission" date="1998-03" db="EMBL/GenBank/DDBJ databases">
        <authorList>
            <person name="Lin R."/>
            <person name="Thompson S."/>
            <person name="Priess J.R."/>
        </authorList>
    </citation>
    <scope>SEQUENCE REVISION</scope>
</reference>
<reference key="3">
    <citation type="journal article" date="1998" name="Science">
        <title>Genome sequence of the nematode C. elegans: a platform for investigating biology.</title>
        <authorList>
            <consortium name="The C. elegans sequencing consortium"/>
        </authorList>
    </citation>
    <scope>NUCLEOTIDE SEQUENCE [LARGE SCALE GENOMIC DNA]</scope>
    <source>
        <strain>Bristol N2</strain>
    </source>
</reference>
<reference key="4">
    <citation type="journal article" date="1999" name="Cell">
        <title>WRM-1 activates the LIT-1 protein kinase to transduce anterior/posterior polarity signals in C. elegans.</title>
        <authorList>
            <person name="Rocheleau C.E."/>
            <person name="Yasuda J."/>
            <person name="Shin T.H."/>
            <person name="Lin R."/>
            <person name="Sawa H."/>
            <person name="Okano H."/>
            <person name="Priess J.R."/>
            <person name="Davis R.J."/>
            <person name="Mello C.C."/>
        </authorList>
    </citation>
    <scope>SUBCELLULAR LOCATION</scope>
    <scope>INTERACTION WITH LIT-1 AND WRM-1</scope>
    <scope>DEVELOPMENTAL STAGE</scope>
    <scope>PHOSPHORYLATION</scope>
</reference>
<reference key="5">
    <citation type="journal article" date="2000" name="Nature">
        <title>Distinct beta-catenins mediate adhesion and signalling functions in C. elegans.</title>
        <authorList>
            <person name="Korswagen H.C."/>
            <person name="Herman M.A."/>
            <person name="Clevers H.C."/>
        </authorList>
    </citation>
    <scope>INTERACTION WITH BAR-1</scope>
</reference>
<reference key="6">
    <citation type="journal article" date="2001" name="EMBO J.">
        <title>A POP-1 repressor complex restricts inappropriate cell type-specific gene transcription during Caenorhabditis elegans embryogenesis.</title>
        <authorList>
            <person name="Calvo D."/>
            <person name="Victor M."/>
            <person name="Gay F."/>
            <person name="Sui G."/>
            <person name="Luke M.P.-S."/>
            <person name="Dufourcq P."/>
            <person name="Wen G."/>
            <person name="Maduro M."/>
            <person name="Rothman J."/>
            <person name="Shi Y."/>
        </authorList>
    </citation>
    <scope>FUNCTION</scope>
    <scope>INTERACTION WITH HDA-1</scope>
</reference>
<reference key="7">
    <citation type="journal article" date="2002" name="Development">
        <title>POP-1 controls axis formation during early gonadogenesis in C. elegans.</title>
        <authorList>
            <person name="Siegfried K.R."/>
            <person name="Kimble J."/>
        </authorList>
    </citation>
    <scope>FUNCTION</scope>
    <scope>MUTAGENESIS OF ASP-9 AND ASN-225</scope>
</reference>
<reference key="8">
    <citation type="journal article" date="2003" name="Development">
        <title>Establishment of POP-1 asymmetry in early C. elegans embryos.</title>
        <authorList>
            <person name="Park F.D."/>
            <person name="Priess J.R."/>
        </authorList>
    </citation>
    <scope>DEVELOPMENTAL STAGE</scope>
</reference>
<reference key="9">
    <citation type="journal article" date="2004" name="Cell">
        <title>Phosphorylation by the beta-catenin/MAPK complex promotes 14-3-3-mediated nuclear export of TCF/POP-1 in signal-responsive cells in C. elegans.</title>
        <authorList>
            <person name="Lo M.-C."/>
            <person name="Gay F."/>
            <person name="Odom R."/>
            <person name="Shi Y."/>
            <person name="Lin R."/>
        </authorList>
    </citation>
    <scope>INTERACTION WITH PAR-5 AND LIT-1</scope>
    <scope>PHOSPHORYLATION AT SER-118 AND SER-127</scope>
    <scope>MUTAGENESIS OF SER-107; SER-109; SER-118; THR-120 AND SER-127</scope>
</reference>
<reference key="10">
    <citation type="journal article" date="2005" name="Dev. Biol.">
        <title>lin-17/Frizzled and lin-18 regulate POP-1/TCF-1 localization and cell type specification during C. elegans vulval development.</title>
        <authorList>
            <person name="Deshpande R."/>
            <person name="Inoue T."/>
            <person name="Priess J.R."/>
            <person name="Hill R.J."/>
        </authorList>
    </citation>
    <scope>SUBCELLULAR LOCATION</scope>
    <scope>DEVELOPMENTAL STAGE</scope>
</reference>
<reference evidence="19" key="11">
    <citation type="journal article" date="2007" name="Development">
        <title>Binary cell fate specification during C. elegans embryogenesis driven by reiterated reciprocal asymmetry of TCF POP-1 and its coactivator beta-catenin SYS-1.</title>
        <authorList>
            <person name="Huang S."/>
            <person name="Shetty P."/>
            <person name="Robertson S.M."/>
            <person name="Lin R."/>
        </authorList>
    </citation>
    <scope>FUNCTION</scope>
    <scope>DISRUPTION PHENOTYPE</scope>
</reference>
<reference key="12">
    <citation type="journal article" date="2007" name="Proc. Natl. Acad. Sci. U.S.A.">
        <title>Reciprocal asymmetry of SYS-1/beta-catenin and POP-1/TCF controls asymmetric divisions in Caenorhabditis elegans.</title>
        <authorList>
            <person name="Phillips B.T."/>
            <person name="Kidd A.R. III"/>
            <person name="King R."/>
            <person name="Hardin J."/>
            <person name="Kimble J."/>
        </authorList>
    </citation>
    <scope>FUNCTION</scope>
    <scope>DISRUPTION PHENOTYPE</scope>
</reference>
<reference key="13">
    <citation type="journal article" date="2009" name="Dev. Biol.">
        <title>A conserved Six-Eya cassette acts downstream of Wnt signaling to direct non-myogenic versus myogenic fates in the C. elegans postembryonic mesoderm.</title>
        <authorList>
            <person name="Amin N.M."/>
            <person name="Lim S.E."/>
            <person name="Shi H."/>
            <person name="Chan T.L."/>
            <person name="Liu J."/>
        </authorList>
    </citation>
    <scope>FUNCTION</scope>
    <scope>SUBCELLULAR LOCATION</scope>
    <scope>DEVELOPMENTAL STAGE</scope>
    <scope>DISRUPTION PHENOTYPE</scope>
    <scope>MUTAGENESIS OF ASP-9 AND ASN-225</scope>
</reference>
<reference key="14">
    <citation type="journal article" date="2009" name="Dev. Cell">
        <title>Linking asymmetric cell division to the terminal differentiation program of postmitotic neurons in C. elegans.</title>
        <authorList>
            <person name="Bertrand V."/>
            <person name="Hobert O."/>
        </authorList>
    </citation>
    <scope>FUNCTION</scope>
    <scope>SUBCELLULAR LOCATION</scope>
    <scope>DEVELOPMENTAL STAGE</scope>
</reference>
<reference key="15">
    <citation type="journal article" date="2010" name="Dev. Biol.">
        <title>EGL-5/ABD-B plays an instructive role in male cell fate determination in the C. elegans somatic gonad.</title>
        <authorList>
            <person name="Kalis A.K."/>
            <person name="Murphy M.W."/>
            <person name="Zarkower D."/>
        </authorList>
    </citation>
    <scope>INTERACTION WITH EGL-5</scope>
</reference>
<reference key="16">
    <citation type="journal article" date="2013" name="Development">
        <title>C. elegans GATA factors EGL-18 and ELT-6 function downstream of Wnt signaling to maintain the progenitor fate during larval asymmetric divisions of the seam cells.</title>
        <authorList>
            <person name="Gorrepati L."/>
            <person name="Thompson K.W."/>
            <person name="Eisenmann D.M."/>
        </authorList>
    </citation>
    <scope>FUNCTION</scope>
    <scope>DISRUPTION PHENOTYPE</scope>
</reference>
<reference key="17">
    <citation type="journal article" date="2015" name="Dev. Cell">
        <title>Atypical Transcriptional Activation by TCF via a Zic Transcription Factor in C. elegans Neuronal Precursors.</title>
        <authorList>
            <person name="Murgan S."/>
            <person name="Kari W."/>
            <person name="Rothbaecher U."/>
            <person name="Iche-Torres M."/>
            <person name="Melenec P."/>
            <person name="Hobert O."/>
            <person name="Bertrand V."/>
        </authorList>
    </citation>
    <scope>FUNCTION</scope>
    <scope>SUBCELLULAR LOCATION</scope>
    <scope>INTERACTION WITH REF-2</scope>
    <scope>DEVELOPMENTAL STAGE</scope>
</reference>
<reference key="18">
    <citation type="journal article" date="2015" name="PLoS Genet.">
        <title>The tumor suppressor BCL7B functions in the Wnt signaling pathway.</title>
        <authorList>
            <person name="Uehara T."/>
            <person name="Kage-Nakadai E."/>
            <person name="Yoshina S."/>
            <person name="Imae R."/>
            <person name="Mitani S."/>
        </authorList>
    </citation>
    <scope>SUBCELLULAR LOCATION</scope>
    <scope>DEVELOPMENTAL STAGE</scope>
</reference>
<reference evidence="19" key="19">
    <citation type="journal article" date="2019" name="Development">
        <title>C. elegans Runx/CBFbeta suppresses POP-1 TCF to convert asymmetric to proliferative division of stem cell-like seam cells.</title>
        <authorList>
            <person name="van der Horst S.E.M."/>
            <person name="Cravo J."/>
            <person name="Woollard A."/>
            <person name="Teapal J."/>
            <person name="van den Heuvel S."/>
        </authorList>
    </citation>
    <scope>FUNCTION</scope>
    <scope>SUBCELLULAR LOCATION</scope>
    <scope>DEVELOPMENTAL STAGE</scope>
    <scope>DISRUPTION PHENOTYPE</scope>
</reference>
<reference key="20">
    <citation type="journal article" date="2022" name="Dev. Biol.">
        <title>pop-1/TCF, ref-2/ZIC and T-box factors regulate the development of anterior cells in the C. elegans embryo.</title>
        <authorList>
            <person name="Rumley J.D."/>
            <person name="Preston E.A."/>
            <person name="Cook D."/>
            <person name="Peng F.L."/>
            <person name="Zacharias A.L."/>
            <person name="Wu L."/>
            <person name="Jileaeva I."/>
            <person name="Murray J.I."/>
        </authorList>
    </citation>
    <scope>FUNCTION</scope>
    <scope>DISRUPTION PHENOTYPE</scope>
</reference>
<reference evidence="21" key="21">
    <citation type="journal article" date="2008" name="Dev. Cell">
        <title>The C. elegans SYS-1 protein is a bona fide beta-catenin.</title>
        <authorList>
            <person name="Liu J."/>
            <person name="Phillips B.T."/>
            <person name="Amaya M.F."/>
            <person name="Kimble J."/>
            <person name="Xu W."/>
        </authorList>
    </citation>
    <scope>X-RAY CRYSTALLOGRAPHY (2.50 ANGSTROMS) OF 7-14</scope>
    <scope>INTERACTION WITH SYS-1</scope>
    <scope>MUTAGENESIS OF ASP-9</scope>
</reference>
<organism>
    <name type="scientific">Caenorhabditis elegans</name>
    <dbReference type="NCBI Taxonomy" id="6239"/>
    <lineage>
        <taxon>Eukaryota</taxon>
        <taxon>Metazoa</taxon>
        <taxon>Ecdysozoa</taxon>
        <taxon>Nematoda</taxon>
        <taxon>Chromadorea</taxon>
        <taxon>Rhabditida</taxon>
        <taxon>Rhabditina</taxon>
        <taxon>Rhabditomorpha</taxon>
        <taxon>Rhabditoidea</taxon>
        <taxon>Rhabditidae</taxon>
        <taxon>Peloderinae</taxon>
        <taxon>Caenorhabditis</taxon>
    </lineage>
</organism>
<name>POP1_CAEEL</name>
<gene>
    <name evidence="20" type="primary">pop-1</name>
    <name evidence="20" type="ORF">W10C8.2</name>
</gene>
<proteinExistence type="evidence at protein level"/>
<feature type="chain" id="PRO_0000048603" description="Protein pop-1">
    <location>
        <begin position="1"/>
        <end position="438"/>
    </location>
</feature>
<feature type="DNA-binding region" description="HMG box" evidence="1">
    <location>
        <begin position="192"/>
        <end position="262"/>
    </location>
</feature>
<feature type="region of interest" description="Sufficient for interaction with beta-catenin/sys-1" evidence="11">
    <location>
        <begin position="1"/>
        <end position="45"/>
    </location>
</feature>
<feature type="region of interest" description="Disordered" evidence="2">
    <location>
        <begin position="1"/>
        <end position="39"/>
    </location>
</feature>
<feature type="region of interest" description="Involved in nuclear asymmetry">
    <location>
        <begin position="88"/>
        <end position="130"/>
    </location>
</feature>
<feature type="region of interest" description="Disordered" evidence="2">
    <location>
        <begin position="250"/>
        <end position="288"/>
    </location>
</feature>
<feature type="region of interest" description="Disordered" evidence="2">
    <location>
        <begin position="318"/>
        <end position="351"/>
    </location>
</feature>
<feature type="region of interest" description="Disordered" evidence="2">
    <location>
        <begin position="378"/>
        <end position="438"/>
    </location>
</feature>
<feature type="compositionally biased region" description="Basic and acidic residues" evidence="2">
    <location>
        <begin position="9"/>
        <end position="18"/>
    </location>
</feature>
<feature type="compositionally biased region" description="Basic and acidic residues" evidence="2">
    <location>
        <begin position="250"/>
        <end position="263"/>
    </location>
</feature>
<feature type="compositionally biased region" description="Basic residues" evidence="2">
    <location>
        <begin position="270"/>
        <end position="279"/>
    </location>
</feature>
<feature type="compositionally biased region" description="Polar residues" evidence="2">
    <location>
        <begin position="324"/>
        <end position="339"/>
    </location>
</feature>
<feature type="compositionally biased region" description="Polar residues" evidence="2">
    <location>
        <begin position="378"/>
        <end position="395"/>
    </location>
</feature>
<feature type="compositionally biased region" description="Acidic residues" evidence="2">
    <location>
        <begin position="406"/>
        <end position="418"/>
    </location>
</feature>
<feature type="modified residue" description="Phosphoserine; by LIT1" evidence="8">
    <location>
        <position position="118"/>
    </location>
</feature>
<feature type="modified residue" description="Phosphoserine; by LIT1" evidence="8">
    <location>
        <position position="127"/>
    </location>
</feature>
<feature type="mutagenesis site" description="Ectopically activates ttx-3 expression in the SIAD/SIBV lineage neuroblast." evidence="16">
    <location>
        <begin position="1"/>
        <end position="43"/>
    </location>
</feature>
<feature type="mutagenesis site" description="In q645; abnormal gonad development and hermaphrodites are sterile. Formation of ectopic M lineage-derived coelomocytes on the dorsal side and ectopic sex myoblast on the ventral side. Simultaneous RNAi-mediated knockdown of ceh-34 causes a loss of all M lineage-derived coelomocytes. Abolishes interactions with beta-catenin/sys-1." evidence="6 11 13">
    <original>D</original>
    <variation>E</variation>
    <location>
        <position position="9"/>
    </location>
</feature>
<feature type="mutagenesis site" description="Abolishes nuclear asymmetry, defective in nuclear export and loss of par-5 interaction; when associated with A-109; A-118; T-120 and A-127." evidence="8">
    <original>S</original>
    <variation>A</variation>
    <location>
        <position position="107"/>
    </location>
</feature>
<feature type="mutagenesis site" description="Abolishes nuclear asymmetry, defective in nuclear export and loss of par-5 interaction; when associated with A-107; A-118; T-120 and A-127." evidence="8">
    <original>S</original>
    <variation>A</variation>
    <location>
        <position position="109"/>
    </location>
</feature>
<feature type="mutagenesis site" description="Abolishes nuclear asymmetry, defective in nuclear export and loss of par-5 interaction; when associated with A-107; A-109; T-120 and A-127." evidence="8">
    <original>S</original>
    <variation>A</variation>
    <location>
        <position position="118"/>
    </location>
</feature>
<feature type="mutagenesis site" description="Abolishes nuclear asymmetry, defective in nuclear export and loss of par-5 interaction; when associated with A-107; A-109; A-118 and A-127." evidence="8">
    <original>T</original>
    <variation>A</variation>
    <location>
        <position position="120"/>
    </location>
</feature>
<feature type="mutagenesis site" description="Abolishes nuclear asymmetry, defective in nuclear export and loss of par-5 interaction; when associated with A-107; A-109; A-118 and A-120." evidence="8">
    <original>S</original>
    <variation>A</variation>
    <location>
        <position position="127"/>
    </location>
</feature>
<feature type="mutagenesis site" description="In q624; low penetrance defects including abnormal gonad development, L1 viability and T-cell defects. Severe loss of M lineage-derived coelomocytes and sex myoblasts." evidence="6 13">
    <original>N</original>
    <variation>I</variation>
    <location>
        <position position="225"/>
    </location>
</feature>
<feature type="sequence conflict" description="In Ref. 1; AAC05308." evidence="19" ref="1">
    <original>M</original>
    <variation>V</variation>
    <location>
        <position position="200"/>
    </location>
</feature>
<keyword id="KW-0002">3D-structure</keyword>
<keyword id="KW-0010">Activator</keyword>
<keyword id="KW-0963">Cytoplasm</keyword>
<keyword id="KW-0217">Developmental protein</keyword>
<keyword id="KW-0238">DNA-binding</keyword>
<keyword id="KW-0539">Nucleus</keyword>
<keyword id="KW-0597">Phosphoprotein</keyword>
<keyword id="KW-1185">Reference proteome</keyword>
<keyword id="KW-0804">Transcription</keyword>
<keyword id="KW-0805">Transcription regulation</keyword>
<keyword id="KW-0879">Wnt signaling pathway</keyword>
<protein>
    <recommendedName>
        <fullName>Protein pop-1</fullName>
    </recommendedName>
    <alternativeName>
        <fullName>Posterior pharynx defect protein 1</fullName>
    </alternativeName>
    <alternativeName>
        <fullName evidence="18">TCF transcription factor pop-1</fullName>
    </alternativeName>
</protein>